<reference key="1">
    <citation type="journal article" date="2002" name="Genome Res.">
        <title>The genome of Methanosarcina acetivorans reveals extensive metabolic and physiological diversity.</title>
        <authorList>
            <person name="Galagan J.E."/>
            <person name="Nusbaum C."/>
            <person name="Roy A."/>
            <person name="Endrizzi M.G."/>
            <person name="Macdonald P."/>
            <person name="FitzHugh W."/>
            <person name="Calvo S."/>
            <person name="Engels R."/>
            <person name="Smirnov S."/>
            <person name="Atnoor D."/>
            <person name="Brown A."/>
            <person name="Allen N."/>
            <person name="Naylor J."/>
            <person name="Stange-Thomann N."/>
            <person name="DeArellano K."/>
            <person name="Johnson R."/>
            <person name="Linton L."/>
            <person name="McEwan P."/>
            <person name="McKernan K."/>
            <person name="Talamas J."/>
            <person name="Tirrell A."/>
            <person name="Ye W."/>
            <person name="Zimmer A."/>
            <person name="Barber R.D."/>
            <person name="Cann I."/>
            <person name="Graham D.E."/>
            <person name="Grahame D.A."/>
            <person name="Guss A.M."/>
            <person name="Hedderich R."/>
            <person name="Ingram-Smith C."/>
            <person name="Kuettner H.C."/>
            <person name="Krzycki J.A."/>
            <person name="Leigh J.A."/>
            <person name="Li W."/>
            <person name="Liu J."/>
            <person name="Mukhopadhyay B."/>
            <person name="Reeve J.N."/>
            <person name="Smith K."/>
            <person name="Springer T.A."/>
            <person name="Umayam L.A."/>
            <person name="White O."/>
            <person name="White R.H."/>
            <person name="de Macario E.C."/>
            <person name="Ferry J.G."/>
            <person name="Jarrell K.F."/>
            <person name="Jing H."/>
            <person name="Macario A.J.L."/>
            <person name="Paulsen I.T."/>
            <person name="Pritchett M."/>
            <person name="Sowers K.R."/>
            <person name="Swanson R.V."/>
            <person name="Zinder S.H."/>
            <person name="Lander E."/>
            <person name="Metcalf W.W."/>
            <person name="Birren B."/>
        </authorList>
    </citation>
    <scope>NUCLEOTIDE SEQUENCE [LARGE SCALE GENOMIC DNA]</scope>
    <source>
        <strain>ATCC 35395 / DSM 2834 / JCM 12185 / C2A</strain>
    </source>
</reference>
<keyword id="KW-0378">Hydrolase</keyword>
<keyword id="KW-0540">Nuclease</keyword>
<keyword id="KW-0547">Nucleotide-binding</keyword>
<keyword id="KW-0597">Phosphoprotein</keyword>
<keyword id="KW-1185">Reference proteome</keyword>
<keyword id="KW-1277">Toxin-antitoxin system</keyword>
<proteinExistence type="inferred from homology"/>
<comment type="function">
    <text evidence="2">Probable toxic component of a putative type VII toxin-antitoxin (TA) system, probably an RNase. Probably neutralized by cognate antitoxin MA_1295. Neutralization may be due to AMPylation by MA_1295.</text>
</comment>
<comment type="subunit">
    <text evidence="2">Homodimer, probably forms a complex with cognate antitoxin MA_1295.</text>
</comment>
<comment type="PTM">
    <text evidence="1">Modified by cognate antitoxin MA_1295; probably at least 2 successive AMPylation events occur on Tyr-82.</text>
</comment>
<comment type="similarity">
    <text evidence="3">Belongs to the HepT RNase toxin family.</text>
</comment>
<protein>
    <recommendedName>
        <fullName>Putative RNase MA_1296</fullName>
        <ecNumber evidence="2">3.1.-.-</ecNumber>
    </recommendedName>
    <alternativeName>
        <fullName>Putative toxin MA_1296</fullName>
    </alternativeName>
</protein>
<dbReference type="EC" id="3.1.-.-" evidence="2"/>
<dbReference type="EMBL" id="AE010299">
    <property type="protein sequence ID" value="AAM04715.1"/>
    <property type="molecule type" value="Genomic_DNA"/>
</dbReference>
<dbReference type="RefSeq" id="WP_011021317.1">
    <property type="nucleotide sequence ID" value="NC_003552.1"/>
</dbReference>
<dbReference type="SMR" id="Q8TR85"/>
<dbReference type="STRING" id="188937.MA_1296"/>
<dbReference type="EnsemblBacteria" id="AAM04715">
    <property type="protein sequence ID" value="AAM04715"/>
    <property type="gene ID" value="MA_1296"/>
</dbReference>
<dbReference type="GeneID" id="1473184"/>
<dbReference type="KEGG" id="mac:MA_1296"/>
<dbReference type="HOGENOM" id="CLU_142825_3_3_2"/>
<dbReference type="InParanoid" id="Q8TR85"/>
<dbReference type="OrthoDB" id="318716at2157"/>
<dbReference type="PhylomeDB" id="Q8TR85"/>
<dbReference type="Proteomes" id="UP000002487">
    <property type="component" value="Chromosome"/>
</dbReference>
<dbReference type="GO" id="GO:0110001">
    <property type="term" value="C:toxin-antitoxin complex"/>
    <property type="evidence" value="ECO:0007669"/>
    <property type="project" value="InterPro"/>
</dbReference>
<dbReference type="GO" id="GO:0000166">
    <property type="term" value="F:nucleotide binding"/>
    <property type="evidence" value="ECO:0007669"/>
    <property type="project" value="UniProtKB-KW"/>
</dbReference>
<dbReference type="GO" id="GO:0004540">
    <property type="term" value="F:RNA nuclease activity"/>
    <property type="evidence" value="ECO:0007669"/>
    <property type="project" value="InterPro"/>
</dbReference>
<dbReference type="InterPro" id="IPR008201">
    <property type="entry name" value="HepT-like"/>
</dbReference>
<dbReference type="InterPro" id="IPR051813">
    <property type="entry name" value="HepT_RNase_toxin"/>
</dbReference>
<dbReference type="PANTHER" id="PTHR34139:SF1">
    <property type="entry name" value="RNASE MJ1380-RELATED"/>
    <property type="match status" value="1"/>
</dbReference>
<dbReference type="PANTHER" id="PTHR34139">
    <property type="entry name" value="UPF0331 PROTEIN MJ0127"/>
    <property type="match status" value="1"/>
</dbReference>
<dbReference type="Pfam" id="PF01934">
    <property type="entry name" value="HepT-like"/>
    <property type="match status" value="1"/>
</dbReference>
<evidence type="ECO:0000250" key="1">
    <source>
        <dbReference type="UniProtKB" id="A0A0B0QJR1"/>
    </source>
</evidence>
<evidence type="ECO:0000250" key="2">
    <source>
        <dbReference type="UniProtKB" id="Q8ECH6"/>
    </source>
</evidence>
<evidence type="ECO:0000305" key="3"/>
<gene>
    <name type="ordered locus">MA_1296</name>
</gene>
<name>Y1296_METAC</name>
<organism>
    <name type="scientific">Methanosarcina acetivorans (strain ATCC 35395 / DSM 2834 / JCM 12185 / C2A)</name>
    <dbReference type="NCBI Taxonomy" id="188937"/>
    <lineage>
        <taxon>Archaea</taxon>
        <taxon>Methanobacteriati</taxon>
        <taxon>Methanobacteriota</taxon>
        <taxon>Stenosarchaea group</taxon>
        <taxon>Methanomicrobia</taxon>
        <taxon>Methanosarcinales</taxon>
        <taxon>Methanosarcinaceae</taxon>
        <taxon>Methanosarcina</taxon>
    </lineage>
</organism>
<accession>Q8TR85</accession>
<sequence length="116" mass="13470">MKKDDRVYLNHILQSVSLIEKYTEDLTEEEFLSNSLFQDATIRQIQIIGEATKNLSKSLRDKYPQVHWRGIAGMRDKLIHDYFGVDINAVWDTIKEDIPALKKIVLEIIQDLNGNP</sequence>
<feature type="chain" id="PRO_0000158258" description="Putative RNase MA_1296">
    <location>
        <begin position="1"/>
        <end position="116"/>
    </location>
</feature>
<feature type="short sequence motif" description="RX(4)HXY motif" evidence="1">
    <location>
        <begin position="75"/>
        <end position="82"/>
    </location>
</feature>
<feature type="active site" evidence="1">
    <location>
        <position position="75"/>
    </location>
</feature>
<feature type="active site" evidence="1">
    <location>
        <position position="80"/>
    </location>
</feature>
<feature type="modified residue" description="O-di-AMP-tyrosine" evidence="1">
    <location>
        <position position="82"/>
    </location>
</feature>